<protein>
    <recommendedName>
        <fullName evidence="11">Mannan endo-1,4-beta-mannosidase</fullName>
        <ecNumber evidence="4 7 8 9">3.2.1.78</ecNumber>
    </recommendedName>
    <alternativeName>
        <fullName evidence="10">Mannanase 26A</fullName>
        <shortName evidence="10">Man26A</shortName>
    </alternativeName>
    <alternativeName>
        <fullName evidence="11">Mannanase A</fullName>
        <shortName evidence="11">ManA</shortName>
    </alternativeName>
</protein>
<sequence>MKTITTARLPWAAQSFALGICLIALLGCNHAANKSSASRADVKPVTVKLVDSQATMETRSLFAFMQEQRRHSIMFGHQHETTQGLTITRTDGTQSDTFNAVGDFAAVYGWDTLSIVAPKAEGDIVAQVKKAYARGGIITVSSHFDNPKTDTQKGVWPVGTSWDQTPAVVDSLPGGAYNPVLNGYLDQVAEWANNLKDEQGRLIPVIFRLYHENTGSWFWWGDKQSTPEQYKQLFRYSVEYLRDVKGVRNFLYAYSPNNFWDVTEANYLERYPGDEWVDVLGFDTYGPVADNADWFRNVVANAALVARMAEARGKIPVISEIGIRAPDIEAGLYDNQWYRKLISGLKADPDAREIAFLLVWRNAPQGVPGPNGTQVPHYWVPANRPENINNGTLEDFQAFYADEFTAFNRDIEQVYQRPTLIVK</sequence>
<gene>
    <name evidence="11" type="primary">manA</name>
    <name type="synonym">man26A</name>
    <name type="ordered locus">CJA_2770</name>
</gene>
<feature type="signal peptide" evidence="1 17">
    <location>
        <begin position="1"/>
        <end position="27"/>
    </location>
</feature>
<feature type="chain" id="PRO_0000012173" description="Mannan endo-1,4-beta-mannosidase">
    <location>
        <begin position="28"/>
        <end position="423"/>
    </location>
</feature>
<feature type="domain" description="GH26" evidence="2">
    <location>
        <begin position="56"/>
        <end position="409"/>
    </location>
</feature>
<feature type="active site" description="Proton donor" evidence="14 15 16 17">
    <location>
        <position position="212"/>
    </location>
</feature>
<feature type="active site" description="Nucleophile" evidence="14 17">
    <location>
        <position position="320"/>
    </location>
</feature>
<feature type="binding site" evidence="5 6">
    <location>
        <position position="121"/>
    </location>
    <ligand>
        <name>substrate</name>
    </ligand>
</feature>
<feature type="binding site" evidence="5 6 7">
    <location>
        <position position="143"/>
    </location>
    <ligand>
        <name>substrate</name>
    </ligand>
</feature>
<feature type="binding site" evidence="5 13">
    <location>
        <position position="162"/>
    </location>
    <ligand>
        <name>substrate</name>
    </ligand>
</feature>
<feature type="binding site" evidence="13">
    <location>
        <position position="217"/>
    </location>
    <ligand>
        <name>substrate</name>
    </ligand>
</feature>
<feature type="binding site" evidence="6 7">
    <location>
        <position position="285"/>
    </location>
    <ligand>
        <name>substrate</name>
    </ligand>
</feature>
<feature type="binding site" evidence="5 6 7">
    <location>
        <begin position="360"/>
        <end position="361"/>
    </location>
    <ligand>
        <name>substrate</name>
    </ligand>
</feature>
<feature type="binding site" evidence="5 6 7">
    <location>
        <position position="377"/>
    </location>
    <ligand>
        <name>substrate</name>
    </ligand>
</feature>
<feature type="site" description="Plays an important role in maintaining the position of the catalytic nucleophile" evidence="4 14">
    <location>
        <position position="211"/>
    </location>
</feature>
<feature type="mutagenesis site" description="Strong decrease of mannanase activity against both oligosaccharides and polysaccharides." evidence="7">
    <original>E</original>
    <variation>A</variation>
    <location>
        <position position="121"/>
    </location>
</feature>
<feature type="mutagenesis site" description="Very low mannanase activity against both mannans and mannooligosaccharides." evidence="4">
    <original>H</original>
    <variation>A</variation>
    <location>
        <position position="143"/>
    </location>
</feature>
<feature type="mutagenesis site" description="Similar to the wild-type." evidence="4">
    <original>W</original>
    <variation>A</variation>
    <location>
        <position position="156"/>
    </location>
</feature>
<feature type="mutagenesis site" description="The mannanase activity is 95, 70, and 30-fold less active than the wild-type against mannotriose, mannotetraose and mannohexaose, respectively." evidence="4">
    <original>W</original>
    <variation>A</variation>
    <location>
        <position position="162"/>
    </location>
</feature>
<feature type="mutagenesis site" description="Causes a 100- and 700-fold decrease in mannanase activity against carob galactomannans and mannotetraose, respectively, but only a 6-fold reduction in mannanase activity against 2,4-DNPM." evidence="4">
    <original>H</original>
    <variation>A</variation>
    <location>
        <position position="211"/>
    </location>
</feature>
<feature type="mutagenesis site" description="Causes a dramatic decrease in the catalytic efficiency against carob galactomannan, azo-carob galactomannan, mannotetraose and 2,4-DNPM." evidence="4 9">
    <original>E</original>
    <variation>A</variation>
    <location>
        <position position="212"/>
    </location>
</feature>
<feature type="mutagenesis site" description="10-fold decrease of the catalytic efficiency against 2,4-DNPM." evidence="9">
    <original>E</original>
    <variation>D</variation>
    <location>
        <position position="212"/>
    </location>
</feature>
<feature type="mutagenesis site" description="Lack of mannanase activity against both mannotriose and mannotetraose." evidence="4">
    <original>W</original>
    <variation>A</variation>
    <location>
        <position position="217"/>
    </location>
</feature>
<feature type="mutagenesis site" description="Retains significant activity against mannotetraose and azo-carob galactomannan." evidence="9">
    <original>D</original>
    <variation>A</variation>
    <location>
        <position position="278"/>
    </location>
</feature>
<feature type="mutagenesis site" description="Retains significant activity against mannotetraose and azo-carob galactomannan." evidence="9">
    <original>D</original>
    <variation>E</variation>
    <location>
        <position position="278"/>
    </location>
</feature>
<feature type="mutagenesis site" description="Retains significant activity against mannotetraose and azo-carob galactomannan. Lack of activity against all substrates; when associated with A-320." evidence="4 9">
    <original>D</original>
    <variation>A</variation>
    <location>
        <position position="283"/>
    </location>
</feature>
<feature type="mutagenesis site" description="Retains significant activity against mannotetraose and azo-carob galactomannan." evidence="9">
    <original>D</original>
    <variation>E</variation>
    <location>
        <position position="283"/>
    </location>
</feature>
<feature type="mutagenesis site" description="Reduction of the catalytic efficiency with carob galactomannan and 2,4-DNPM." evidence="4">
    <original>Y</original>
    <variation>A</variation>
    <location>
        <position position="285"/>
    </location>
</feature>
<feature type="mutagenesis site" description="Does not alter the affinity against carob galactomannan, azo-carob galactomannan, mannotetraose and 2,4-DNPM. Lack of activity against all substrates; when associated with A-283." evidence="4 9">
    <original>E</original>
    <variation>A</variation>
    <location>
        <position position="320"/>
    </location>
</feature>
<feature type="mutagenesis site" description="Causes a dramatic decrease in the catalytic efficiency against mannotetraose." evidence="9">
    <original>E</original>
    <variation>D</variation>
    <location>
        <position position="320"/>
    </location>
</feature>
<feature type="mutagenesis site" description="Lack of activity against all substrates." evidence="6 7">
    <original>E</original>
    <variation>G</variation>
    <location>
        <position position="320"/>
    </location>
</feature>
<feature type="mutagenesis site" description="Lack of activity against all substrates." evidence="4">
    <original>W</original>
    <variation>A</variation>
    <location>
        <position position="360"/>
    </location>
</feature>
<feature type="mutagenesis site" description="Strong decrease of mannanase activity against oligosaccharides, while the reduction in the rate of polysaccharide hydrolysis is more modest. Strong decrease of mannanase activity and not able to distinguish between mannose and glucose units; when associated with A-377." evidence="7">
    <original>R</original>
    <variation>A</variation>
    <location>
        <position position="361"/>
    </location>
</feature>
<feature type="mutagenesis site" description="100-fold decrease in the activity of the mannanase against mannotetraose and 4-nitrophenyl-beta-D-Man2. It hydrolyzes polysaccharides only 10-20-fold less efficiently than the wild-type. Strong decrease of mannanase activity and not able to distinguish between mannose and glucose units; when associated with A-361." evidence="7">
    <original>H</original>
    <variation>A</variation>
    <location>
        <position position="377"/>
    </location>
</feature>
<feature type="strand" evidence="19">
    <location>
        <begin position="45"/>
        <end position="47"/>
    </location>
</feature>
<feature type="helix" evidence="18">
    <location>
        <begin position="56"/>
        <end position="68"/>
    </location>
</feature>
<feature type="turn" evidence="18">
    <location>
        <begin position="69"/>
        <end position="71"/>
    </location>
</feature>
<feature type="strand" evidence="18">
    <location>
        <begin position="73"/>
        <end position="78"/>
    </location>
</feature>
<feature type="turn" evidence="18">
    <location>
        <begin position="79"/>
        <end position="82"/>
    </location>
</feature>
<feature type="strand" evidence="18">
    <location>
        <begin position="91"/>
        <end position="93"/>
    </location>
</feature>
<feature type="helix" evidence="18">
    <location>
        <begin position="96"/>
        <end position="101"/>
    </location>
</feature>
<feature type="strand" evidence="18">
    <location>
        <begin position="106"/>
        <end position="111"/>
    </location>
</feature>
<feature type="helix" evidence="18">
    <location>
        <begin position="112"/>
        <end position="114"/>
    </location>
</feature>
<feature type="helix" evidence="18">
    <location>
        <begin position="125"/>
        <end position="133"/>
    </location>
</feature>
<feature type="strand" evidence="18">
    <location>
        <begin position="137"/>
        <end position="141"/>
    </location>
</feature>
<feature type="turn" evidence="18">
    <location>
        <begin position="147"/>
        <end position="149"/>
    </location>
</feature>
<feature type="helix" evidence="18">
    <location>
        <begin position="150"/>
        <end position="152"/>
    </location>
</feature>
<feature type="turn" evidence="18">
    <location>
        <begin position="156"/>
        <end position="159"/>
    </location>
</feature>
<feature type="turn" evidence="18">
    <location>
        <begin position="169"/>
        <end position="171"/>
    </location>
</feature>
<feature type="helix" evidence="18">
    <location>
        <begin position="178"/>
        <end position="193"/>
    </location>
</feature>
<feature type="strand" evidence="18">
    <location>
        <begin position="205"/>
        <end position="208"/>
    </location>
</feature>
<feature type="strand" evidence="18">
    <location>
        <begin position="215"/>
        <end position="218"/>
    </location>
</feature>
<feature type="turn" evidence="19">
    <location>
        <begin position="222"/>
        <end position="224"/>
    </location>
</feature>
<feature type="helix" evidence="18">
    <location>
        <begin position="227"/>
        <end position="242"/>
    </location>
</feature>
<feature type="strand" evidence="18">
    <location>
        <begin position="249"/>
        <end position="254"/>
    </location>
</feature>
<feature type="helix" evidence="18">
    <location>
        <begin position="264"/>
        <end position="268"/>
    </location>
</feature>
<feature type="turn" evidence="18">
    <location>
        <begin position="274"/>
        <end position="276"/>
    </location>
</feature>
<feature type="strand" evidence="18">
    <location>
        <begin position="278"/>
        <end position="280"/>
    </location>
</feature>
<feature type="strand" evidence="18">
    <location>
        <begin position="283"/>
        <end position="286"/>
    </location>
</feature>
<feature type="strand" evidence="18">
    <location>
        <begin position="288"/>
        <end position="290"/>
    </location>
</feature>
<feature type="helix" evidence="18">
    <location>
        <begin position="292"/>
        <end position="312"/>
    </location>
</feature>
<feature type="strand" evidence="18">
    <location>
        <begin position="320"/>
        <end position="323"/>
    </location>
</feature>
<feature type="helix" evidence="18">
    <location>
        <begin position="325"/>
        <end position="329"/>
    </location>
</feature>
<feature type="helix" evidence="18">
    <location>
        <begin position="337"/>
        <end position="347"/>
    </location>
</feature>
<feature type="helix" evidence="18">
    <location>
        <begin position="351"/>
        <end position="353"/>
    </location>
</feature>
<feature type="strand" evidence="18">
    <location>
        <begin position="355"/>
        <end position="359"/>
    </location>
</feature>
<feature type="helix" evidence="18">
    <location>
        <begin position="385"/>
        <end position="389"/>
    </location>
</feature>
<feature type="helix" evidence="18">
    <location>
        <begin position="392"/>
        <end position="401"/>
    </location>
</feature>
<feature type="helix" evidence="18">
    <location>
        <begin position="408"/>
        <end position="410"/>
    </location>
</feature>
<feature type="strand" evidence="19">
    <location>
        <begin position="419"/>
        <end position="421"/>
    </location>
</feature>
<dbReference type="EC" id="3.2.1.78" evidence="4 7 8 9"/>
<dbReference type="EMBL" id="X82179">
    <property type="protein sequence ID" value="CAA57670.2"/>
    <property type="molecule type" value="Genomic_DNA"/>
</dbReference>
<dbReference type="EMBL" id="CP000934">
    <property type="protein sequence ID" value="ACE82849.1"/>
    <property type="molecule type" value="Genomic_DNA"/>
</dbReference>
<dbReference type="PIR" id="S53374">
    <property type="entry name" value="S53374"/>
</dbReference>
<dbReference type="RefSeq" id="WP_012488364.1">
    <property type="nucleotide sequence ID" value="NC_010995.1"/>
</dbReference>
<dbReference type="PDB" id="1GVY">
    <property type="method" value="X-ray"/>
    <property type="resolution" value="1.70 A"/>
    <property type="chains" value="A=39-422"/>
</dbReference>
<dbReference type="PDB" id="1GW1">
    <property type="method" value="X-ray"/>
    <property type="resolution" value="1.65 A"/>
    <property type="chains" value="A=43-421"/>
</dbReference>
<dbReference type="PDB" id="1J9Y">
    <property type="method" value="X-ray"/>
    <property type="resolution" value="1.85 A"/>
    <property type="chains" value="A=39-423"/>
</dbReference>
<dbReference type="PDB" id="1ODZ">
    <property type="method" value="X-ray"/>
    <property type="resolution" value="1.40 A"/>
    <property type="chains" value="A/B=39-423"/>
</dbReference>
<dbReference type="PDB" id="1R7O">
    <property type="method" value="X-ray"/>
    <property type="resolution" value="1.85 A"/>
    <property type="chains" value="A=29-423"/>
</dbReference>
<dbReference type="PDB" id="2WHM">
    <property type="method" value="X-ray"/>
    <property type="resolution" value="1.50 A"/>
    <property type="chains" value="A=39-423"/>
</dbReference>
<dbReference type="PDBsum" id="1GVY"/>
<dbReference type="PDBsum" id="1GW1"/>
<dbReference type="PDBsum" id="1J9Y"/>
<dbReference type="PDBsum" id="1ODZ"/>
<dbReference type="PDBsum" id="1R7O"/>
<dbReference type="PDBsum" id="2WHM"/>
<dbReference type="SMR" id="P49424"/>
<dbReference type="STRING" id="498211.CJA_2770"/>
<dbReference type="DrugBank" id="DB02680">
    <property type="generic name" value="1,3-Dinitrobenzene"/>
</dbReference>
<dbReference type="DrugBank" id="DB03814">
    <property type="generic name" value="2-(N-morpholino)ethanesulfonic acid"/>
</dbReference>
<dbReference type="DrugBank" id="DB04084">
    <property type="generic name" value="2-deoxy-2-fluoro-Alpha-D-mannose"/>
</dbReference>
<dbReference type="DrugBank" id="DB04483">
    <property type="generic name" value="2-deoxy-2-fluoro-Beta-D-mannose"/>
</dbReference>
<dbReference type="CAZy" id="GH26">
    <property type="family name" value="Glycoside Hydrolase Family 26"/>
</dbReference>
<dbReference type="KEGG" id="cja:CJA_2770"/>
<dbReference type="eggNOG" id="COG4124">
    <property type="taxonomic scope" value="Bacteria"/>
</dbReference>
<dbReference type="HOGENOM" id="CLU_016930_0_1_6"/>
<dbReference type="OrthoDB" id="9816550at2"/>
<dbReference type="EvolutionaryTrace" id="P49424"/>
<dbReference type="Proteomes" id="UP000001036">
    <property type="component" value="Chromosome"/>
</dbReference>
<dbReference type="GO" id="GO:0016985">
    <property type="term" value="F:mannan endo-1,4-beta-mannosidase activity"/>
    <property type="evidence" value="ECO:0000314"/>
    <property type="project" value="UniProtKB"/>
</dbReference>
<dbReference type="GO" id="GO:0051069">
    <property type="term" value="P:galactomannan metabolic process"/>
    <property type="evidence" value="ECO:0000314"/>
    <property type="project" value="UniProtKB"/>
</dbReference>
<dbReference type="GO" id="GO:0010391">
    <property type="term" value="P:glucomannan metabolic process"/>
    <property type="evidence" value="ECO:0000314"/>
    <property type="project" value="UniProtKB"/>
</dbReference>
<dbReference type="GO" id="GO:0000272">
    <property type="term" value="P:polysaccharide catabolic process"/>
    <property type="evidence" value="ECO:0007669"/>
    <property type="project" value="UniProtKB-KW"/>
</dbReference>
<dbReference type="FunFam" id="3.20.20.80:FF:000550">
    <property type="entry name" value="Mannan endo-1,4-beta-mannosidase"/>
    <property type="match status" value="1"/>
</dbReference>
<dbReference type="Gene3D" id="3.20.20.80">
    <property type="entry name" value="Glycosidases"/>
    <property type="match status" value="1"/>
</dbReference>
<dbReference type="InterPro" id="IPR022790">
    <property type="entry name" value="GH26_dom"/>
</dbReference>
<dbReference type="InterPro" id="IPR000805">
    <property type="entry name" value="Glyco_hydro_26"/>
</dbReference>
<dbReference type="InterPro" id="IPR017853">
    <property type="entry name" value="Glycoside_hydrolase_SF"/>
</dbReference>
<dbReference type="PANTHER" id="PTHR40079:SF4">
    <property type="entry name" value="GH26 DOMAIN-CONTAINING PROTEIN-RELATED"/>
    <property type="match status" value="1"/>
</dbReference>
<dbReference type="PANTHER" id="PTHR40079">
    <property type="entry name" value="MANNAN ENDO-1,4-BETA-MANNOSIDASE E-RELATED"/>
    <property type="match status" value="1"/>
</dbReference>
<dbReference type="Pfam" id="PF02156">
    <property type="entry name" value="Glyco_hydro_26"/>
    <property type="match status" value="1"/>
</dbReference>
<dbReference type="PRINTS" id="PR00739">
    <property type="entry name" value="GLHYDRLASE26"/>
</dbReference>
<dbReference type="SUPFAM" id="SSF51445">
    <property type="entry name" value="(Trans)glycosidases"/>
    <property type="match status" value="1"/>
</dbReference>
<dbReference type="PROSITE" id="PS51764">
    <property type="entry name" value="GH26"/>
    <property type="match status" value="1"/>
</dbReference>
<keyword id="KW-0002">3D-structure</keyword>
<keyword id="KW-0119">Carbohydrate metabolism</keyword>
<keyword id="KW-0903">Direct protein sequencing</keyword>
<keyword id="KW-0326">Glycosidase</keyword>
<keyword id="KW-0378">Hydrolase</keyword>
<keyword id="KW-0624">Polysaccharide degradation</keyword>
<keyword id="KW-1185">Reference proteome</keyword>
<keyword id="KW-0732">Signal</keyword>
<proteinExistence type="evidence at protein level"/>
<reference key="1">
    <citation type="journal article" date="1995" name="Biochem. J.">
        <title>A non-modular endo-beta-1,4-mannanase from Pseudomonas fluorescens subspecies cellulosa.</title>
        <authorList>
            <person name="Braithwaite K.L."/>
            <person name="Black G.W."/>
            <person name="Hazlewood G.P."/>
            <person name="Ali B.R.S."/>
            <person name="Gilbert H.J."/>
        </authorList>
    </citation>
    <scope>NUCLEOTIDE SEQUENCE [GENOMIC DNA]</scope>
    <scope>PROTEIN SEQUENCE OF 39-48</scope>
    <scope>FUNCTION</scope>
    <scope>CATALYTIC ACTIVITY</scope>
    <scope>BIOPHYSICOCHEMICAL PROPERTIES</scope>
    <scope>SUBSTRATE SPECIFICITY</scope>
</reference>
<reference key="2">
    <citation type="submission" date="2001-07" db="EMBL/GenBank/DDBJ databases">
        <authorList>
            <person name="Gilbert H.J."/>
        </authorList>
    </citation>
    <scope>SEQUENCE REVISION TO 364-423</scope>
</reference>
<reference key="3">
    <citation type="journal article" date="2008" name="J. Bacteriol.">
        <title>Insights into plant cell wall degradation from the genome sequence of the soil bacterium Cellvibrio japonicus.</title>
        <authorList>
            <person name="DeBoy R.T."/>
            <person name="Mongodin E.F."/>
            <person name="Fouts D.E."/>
            <person name="Tailford L.E."/>
            <person name="Khouri H."/>
            <person name="Emerson J.B."/>
            <person name="Mohamoud Y."/>
            <person name="Watkins K."/>
            <person name="Henrissat B."/>
            <person name="Gilbert H.J."/>
            <person name="Nelson K.E."/>
        </authorList>
    </citation>
    <scope>NUCLEOTIDE SEQUENCE [LARGE SCALE GENOMIC DNA]</scope>
    <source>
        <strain>Ueda107</strain>
    </source>
</reference>
<reference key="4">
    <citation type="journal article" date="1996" name="Biochemistry">
        <title>Mannanase A from Pseudomonas fluorescens ssp. cellulosa is a retaining glycosyl hydrolase in which E212 and E320 are the putative catalytic residues.</title>
        <authorList>
            <person name="Bolam D.N."/>
            <person name="Hughes N."/>
            <person name="Virden R."/>
            <person name="Lakey J.H."/>
            <person name="Hazlewood G.P."/>
            <person name="Henrissat B."/>
            <person name="Braithwaite K.L."/>
            <person name="Gilbert H.J."/>
        </authorList>
    </citation>
    <scope>FUNCTION</scope>
    <scope>CATALYTIC ACTIVITY</scope>
    <scope>MUTAGENESIS OF GLU-212; ASP-278; ASP-283 AND GLU-320</scope>
    <scope>BIOPHYSICOCHEMICAL PROPERTIES</scope>
    <scope>REACTION MECHANISM</scope>
</reference>
<reference key="5">
    <citation type="journal article" date="2000" name="FEMS Microbiol. Lett.">
        <title>Alpha-galactosidase A from Pseudomonas fluorescens subsp. cellulosa: cloning, high level expression and its role in galactomannan hydrolysis.</title>
        <authorList>
            <person name="Halstead J.R."/>
            <person name="Fransen M.P."/>
            <person name="Eberhart R.Y."/>
            <person name="Park A.J."/>
            <person name="Gilbert H.J."/>
            <person name="Hazlewood G.P."/>
        </authorList>
    </citation>
    <scope>FUNCTION</scope>
</reference>
<reference key="6">
    <citation type="journal article" date="2001" name="J. Biol. Chem.">
        <title>Crystal structure of mannanase 26A from Pseudomonas cellulosa and analysis of residues involved in substrate binding.</title>
        <authorList>
            <person name="Hogg D."/>
            <person name="Woo E.J."/>
            <person name="Bolam D.N."/>
            <person name="McKie V.A."/>
            <person name="Gilbert H.J."/>
            <person name="Pickersgill R.W."/>
        </authorList>
    </citation>
    <scope>X-RAY CRYSTALLOGRAPHY (1.85 ANGSTROMS)</scope>
    <scope>FUNCTION</scope>
    <scope>CATALYTIC ACTIVITY</scope>
    <scope>BIOPHYSICOCHEMICAL PROPERTIES</scope>
    <scope>MUTAGENESIS OF HIS-143; TRP-156; TRP-162; HIS-211; TRP-217; ASP-283; TYR-285; GLU-320 AND TRP-360</scope>
</reference>
<reference key="7">
    <citation type="journal article" date="2002" name="Angew. Chem. Int. Ed. Engl.">
        <title>Substrate distortion by a beta-mannanase: snapshots of the Michaelis and covalent-intermediate complexes suggest a B(2,5) conformation for the transition state.</title>
        <authorList>
            <person name="Ducros V.M."/>
            <person name="Zechel D.L."/>
            <person name="Murshudov G.N."/>
            <person name="Gilbert H.J."/>
            <person name="Szabo L."/>
            <person name="Stoll D."/>
            <person name="Withers S.G."/>
            <person name="Davies G.J."/>
        </authorList>
    </citation>
    <scope>X-RAY CRYSTALLOGRAPHY (1.65 ANGSTROMS) OF MUTANT ALA-212 OF 39-421 IN COMPLEX WITH SUBSTRATE ANALOGS</scope>
    <scope>MUTAGENESIS OF GLU-212</scope>
</reference>
<reference key="8">
    <citation type="journal article" date="2003" name="Chem. Commun. (Camb.)">
        <title>Expansion of the glycosynthase repertoire to produce defined manno-oligosaccharides.</title>
        <authorList>
            <person name="Jahn M."/>
            <person name="Stoll D."/>
            <person name="Warren R.A."/>
            <person name="Szabo L."/>
            <person name="Singh P."/>
            <person name="Gilbert H.J."/>
            <person name="Ducros V.M."/>
            <person name="Davies G.J."/>
            <person name="Withers S.G."/>
        </authorList>
    </citation>
    <scope>X-RAY CRYSTALLOGRAPHY (1.40 ANGSTROMS) MUTANT GLY-320 OF 39-423 IN COMPLEX WITH SUBSTRATE ANALOGS</scope>
    <scope>MUTAGENESIS OF GLU-320</scope>
    <scope>SUBUNIT</scope>
</reference>
<reference key="9">
    <citation type="submission" date="2003-10" db="PDB data bank">
        <title>Structural investigation of Mannanase 26A from Pseudomonas cellulosa reveals an induced fit mechanism and a non-substrate ligand binding site.</title>
        <authorList>
            <person name="Oakley A.J."/>
            <person name="Wilce M.C.J."/>
        </authorList>
    </citation>
    <scope>X-RAY CRYSTALLOGRAPHY (1.85 ANGSTROMS) OF 29-423</scope>
</reference>
<reference key="10">
    <citation type="journal article" date="2009" name="Biochemistry">
        <title>Understanding how diverse beta-mannanases recognize heterogeneous substrates.</title>
        <authorList>
            <person name="Tailford L.E."/>
            <person name="Ducros V.M."/>
            <person name="Flint J.E."/>
            <person name="Roberts S.M."/>
            <person name="Morland C."/>
            <person name="Zechel D.L."/>
            <person name="Smith N."/>
            <person name="Bjornvad M.E."/>
            <person name="Borchert T.V."/>
            <person name="Wilson K.S."/>
            <person name="Davies G.J."/>
            <person name="Gilbert H.J."/>
        </authorList>
    </citation>
    <scope>X-RAY CRYSTALLOGRAPHY (1.50 ANGSTROMS) OF DOUBLE MUTANT ALA-121/GLY-320 OF 39-423 IN COMPLEX WITH SUBSTRATE ANALOGS</scope>
    <scope>FUNCTION</scope>
    <scope>CATALYTIC ACTIVITY</scope>
    <scope>BIOPHYSICOCHEMICAL PROPERTIES</scope>
    <scope>MUTAGENESIS OF GLU-121; GLU-320; ARG-361 AND HIS-377</scope>
    <scope>SUBSTRATE SPECIFICITY</scope>
</reference>
<evidence type="ECO:0000255" key="1">
    <source>
        <dbReference type="PROSITE-ProRule" id="PRU00303"/>
    </source>
</evidence>
<evidence type="ECO:0000255" key="2">
    <source>
        <dbReference type="PROSITE-ProRule" id="PRU01100"/>
    </source>
</evidence>
<evidence type="ECO:0000269" key="3">
    <source>
    </source>
</evidence>
<evidence type="ECO:0000269" key="4">
    <source>
    </source>
</evidence>
<evidence type="ECO:0000269" key="5">
    <source>
    </source>
</evidence>
<evidence type="ECO:0000269" key="6">
    <source>
    </source>
</evidence>
<evidence type="ECO:0000269" key="7">
    <source>
    </source>
</evidence>
<evidence type="ECO:0000269" key="8">
    <source>
    </source>
</evidence>
<evidence type="ECO:0000269" key="9">
    <source>
    </source>
</evidence>
<evidence type="ECO:0000303" key="10">
    <source>
    </source>
</evidence>
<evidence type="ECO:0000303" key="11">
    <source>
    </source>
</evidence>
<evidence type="ECO:0000305" key="12"/>
<evidence type="ECO:0000305" key="13">
    <source>
    </source>
</evidence>
<evidence type="ECO:0000305" key="14">
    <source>
    </source>
</evidence>
<evidence type="ECO:0000305" key="15">
    <source>
    </source>
</evidence>
<evidence type="ECO:0000305" key="16">
    <source>
    </source>
</evidence>
<evidence type="ECO:0000305" key="17">
    <source>
    </source>
</evidence>
<evidence type="ECO:0007829" key="18">
    <source>
        <dbReference type="PDB" id="1ODZ"/>
    </source>
</evidence>
<evidence type="ECO:0007829" key="19">
    <source>
        <dbReference type="PDB" id="2WHM"/>
    </source>
</evidence>
<accession>P49424</accession>
<accession>B3PBK3</accession>
<comment type="function">
    <text evidence="3 4 7 8 9">Catalyzes the endo hydrolysis of beta-1,4-linked mannan and galactomannan, but displays little activity towards other polysaccharides located in the plant cell wall (PubMed:11382747). Preferentially hydrolyzes the larger oligosaccharides and has greater activity against non-substituted polysaccharides (PubMed:7848261, PubMed:8973192). It displays tight specificity for mannose at both the -2 and the -1 subsites (PubMed:19441796). Appears to act in synergy with alpha-galactosidase (AgaA) to elicit hydrolysis of galactomannan (PubMed:11064195).</text>
</comment>
<comment type="catalytic activity">
    <reaction evidence="4 7 8 9">
        <text>Random hydrolysis of (1-&gt;4)-beta-D-mannosidic linkages in mannans, galactomannans and glucomannans.</text>
        <dbReference type="EC" id="3.2.1.78"/>
    </reaction>
</comment>
<comment type="biophysicochemical properties">
    <kinetics>
        <KM evidence="9">0.9 mg/ml for carob galactomannan</KM>
        <KM evidence="7">2.8 mg/ml for glucomannan</KM>
        <KM evidence="7">3.2 mg/ml for galactomannan</KM>
        <KM evidence="4">9.3 uM for 2,4-dinitrophenyl-beta-mannobioside (2,4-DNPM)</KM>
        <KM evidence="9">12.3 uM for 2,4-dinitrophenyl-beta-mannobioside (2,4-DNPM)</KM>
        <text evidence="4 7 9">kcat is 14.7 sec(-1) for mannanase activity with 2,4-dinitrophenyl-beta-mannobioside (2,4-DNPM) as substrate (PubMed:8973192). kcat is 20 sec(-1) for mannanase activity with 2,4-dinitrophenyl-beta-mannobioside (2,4-DNPM) as substrate (PubMed:11382747). kcat is 1759 sec(-1) for mannanase activity with carob galactomannan as substrate (PubMed:8973192). kcat is 2904 sec(-1) for mannanase activity with carob galactomannan as substrate (PubMed:11382747). kcat is 3861 sec(-1) for mannanase activity with mannotetraose as substrate (PubMed:8973192). kcat is 280000 min(-1) for mannanase activity with galactomannan as substrate (PubMed:19441796). kcat is 400000 min(-1) for mannanase activity with glucomannan as substrate (PubMed:19441796).</text>
    </kinetics>
    <phDependence>
        <text evidence="8">Optimum pH is about 7.0.</text>
    </phDependence>
</comment>
<comment type="subunit">
    <text evidence="6">Homodimer.</text>
</comment>
<comment type="similarity">
    <text evidence="2 12">Belongs to the glycosyl hydrolase 26 family.</text>
</comment>
<name>MANA_CELJU</name>
<organism>
    <name type="scientific">Cellvibrio japonicus (strain Ueda107)</name>
    <name type="common">Pseudomonas fluorescens subsp. cellulosa</name>
    <dbReference type="NCBI Taxonomy" id="498211"/>
    <lineage>
        <taxon>Bacteria</taxon>
        <taxon>Pseudomonadati</taxon>
        <taxon>Pseudomonadota</taxon>
        <taxon>Gammaproteobacteria</taxon>
        <taxon>Cellvibrionales</taxon>
        <taxon>Cellvibrionaceae</taxon>
        <taxon>Cellvibrio</taxon>
    </lineage>
</organism>